<evidence type="ECO:0000255" key="1">
    <source>
        <dbReference type="HAMAP-Rule" id="MF_03054"/>
    </source>
</evidence>
<evidence type="ECO:0000305" key="2"/>
<comment type="function">
    <text evidence="1">Plays a central role in 2-thiolation of mcm(5)S(2)U at tRNA wobble positions of tRNA(Lys), tRNA(Glu) and tRNA(Gln). May act by forming a heterodimer with ctu1/atpbd3 that ligates sulfur from thiocarboxylated urm1 onto the uridine of tRNAs at wobble position.</text>
</comment>
<comment type="pathway">
    <text evidence="1">tRNA modification; 5-methoxycarbonylmethyl-2-thiouridine-tRNA biosynthesis.</text>
</comment>
<comment type="subcellular location">
    <subcellularLocation>
        <location evidence="1">Cytoplasm</location>
    </subcellularLocation>
</comment>
<comment type="similarity">
    <text evidence="1">Belongs to the CTU2/NCS2 family.</text>
</comment>
<comment type="sequence caution" evidence="2">
    <conflict type="erroneous initiation">
        <sequence resource="EMBL-CDS" id="AAH89700"/>
    </conflict>
</comment>
<accession>Q28ES8</accession>
<accession>B3DL40</accession>
<accession>Q5FVY8</accession>
<protein>
    <recommendedName>
        <fullName evidence="1">Cytoplasmic tRNA 2-thiolation protein 2</fullName>
    </recommendedName>
</protein>
<gene>
    <name type="primary">ctu2</name>
    <name type="synonym">ncs2</name>
    <name type="ORF">TGas114e15.1</name>
</gene>
<proteinExistence type="evidence at transcript level"/>
<sequence>MCEEEEVYCPELQDTTQGKSLGKTCMKCKESSAVLLIRAGDAFCKSCFKEYFVHKFRATLGKNRVIYPGEKVLLAFSGGPSSSAMVQQVQEGMSRDAPKKLRFVPGILFIDEGTTCGMSHEERQQNMSEVQNVLQQTGFPFYIVSLEQVFSLPGSILQRGVPEQRANYKQEVDRFMVQQQAQGETGCSDILENLAKLGVNVSESSRESDKMFQSTCRHPPDTHTQKLIQLFASAKTLTAKHQLLHTLRSHLILHIARTCGYSKVMSGESCTRLSVSLLSNISLGRGAFLPLDTGFCDSRYGDVDIIRPMREYSLKEIAFYNRLFHVSSVFIPALNTKVLENSSIQQLSEVFINRLQADFPSTVSTVYRTSEKLNVSKIDANQGTCAKERCLLCLSPLDTQVGEASAFHATQISHYISQKILMKFNDPANSSGKSCCQEGKCCKGPGYGDFCQPRALQAPSFVDMLCYGCRLTVKDLQSLDALPQYVLHEAEHRSRRIEMRKEIEEFLLDKDEENLH</sequence>
<organism>
    <name type="scientific">Xenopus tropicalis</name>
    <name type="common">Western clawed frog</name>
    <name type="synonym">Silurana tropicalis</name>
    <dbReference type="NCBI Taxonomy" id="8364"/>
    <lineage>
        <taxon>Eukaryota</taxon>
        <taxon>Metazoa</taxon>
        <taxon>Chordata</taxon>
        <taxon>Craniata</taxon>
        <taxon>Vertebrata</taxon>
        <taxon>Euteleostomi</taxon>
        <taxon>Amphibia</taxon>
        <taxon>Batrachia</taxon>
        <taxon>Anura</taxon>
        <taxon>Pipoidea</taxon>
        <taxon>Pipidae</taxon>
        <taxon>Xenopodinae</taxon>
        <taxon>Xenopus</taxon>
        <taxon>Silurana</taxon>
    </lineage>
</organism>
<reference key="1">
    <citation type="submission" date="2006-10" db="EMBL/GenBank/DDBJ databases">
        <authorList>
            <consortium name="Sanger Xenopus tropicalis EST/cDNA project"/>
        </authorList>
    </citation>
    <scope>NUCLEOTIDE SEQUENCE [LARGE SCALE MRNA]</scope>
    <source>
        <tissue>Gastrula</tissue>
    </source>
</reference>
<reference key="2">
    <citation type="submission" date="2005-02" db="EMBL/GenBank/DDBJ databases">
        <authorList>
            <consortium name="NIH - Xenopus Gene Collection (XGC) project"/>
        </authorList>
    </citation>
    <scope>NUCLEOTIDE SEQUENCE [LARGE SCALE MRNA]</scope>
    <source>
        <tissue>Embryo</tissue>
        <tissue>Neurula</tissue>
    </source>
</reference>
<name>CTU2_XENTR</name>
<feature type="chain" id="PRO_0000289181" description="Cytoplasmic tRNA 2-thiolation protein 2">
    <location>
        <begin position="1"/>
        <end position="516"/>
    </location>
</feature>
<feature type="sequence conflict" description="In Ref. 2; AAH89700." evidence="2" ref="2">
    <original>S</original>
    <variation>C</variation>
    <location>
        <position position="208"/>
    </location>
</feature>
<feature type="sequence conflict" description="In Ref. 2; AAH89700." evidence="2" ref="2">
    <original>A</original>
    <variation>T</variation>
    <location>
        <position position="232"/>
    </location>
</feature>
<feature type="sequence conflict" description="In Ref. 2; AAH89700." evidence="2" ref="2">
    <original>P</original>
    <variation>Q</variation>
    <location>
        <position position="332"/>
    </location>
</feature>
<keyword id="KW-0963">Cytoplasm</keyword>
<keyword id="KW-1185">Reference proteome</keyword>
<keyword id="KW-0819">tRNA processing</keyword>
<dbReference type="EMBL" id="CR762362">
    <property type="protein sequence ID" value="CAJ83521.1"/>
    <property type="molecule type" value="mRNA"/>
</dbReference>
<dbReference type="EMBL" id="BC089700">
    <property type="protein sequence ID" value="AAH89700.1"/>
    <property type="status" value="ALT_INIT"/>
    <property type="molecule type" value="mRNA"/>
</dbReference>
<dbReference type="EMBL" id="BC167302">
    <property type="protein sequence ID" value="AAI67302.1"/>
    <property type="molecule type" value="mRNA"/>
</dbReference>
<dbReference type="EMBL" id="BC170700">
    <property type="protein sequence ID" value="AAI70700.1"/>
    <property type="molecule type" value="mRNA"/>
</dbReference>
<dbReference type="EMBL" id="BC170702">
    <property type="protein sequence ID" value="AAI70702.1"/>
    <property type="molecule type" value="mRNA"/>
</dbReference>
<dbReference type="RefSeq" id="NP_001034829.1">
    <property type="nucleotide sequence ID" value="NM_001039740.1"/>
</dbReference>
<dbReference type="RefSeq" id="XP_012816477.2">
    <property type="nucleotide sequence ID" value="XM_012961023.2"/>
</dbReference>
<dbReference type="FunCoup" id="Q28ES8">
    <property type="interactions" value="1626"/>
</dbReference>
<dbReference type="STRING" id="8364.ENSXETP00000031452"/>
<dbReference type="PaxDb" id="8364-ENSXETP00000024569"/>
<dbReference type="GeneID" id="548371"/>
<dbReference type="KEGG" id="xtr:548371"/>
<dbReference type="AGR" id="Xenbase:XB-GENE-5732028"/>
<dbReference type="CTD" id="348180"/>
<dbReference type="Xenbase" id="XB-GENE-5732028">
    <property type="gene designation" value="ctu2"/>
</dbReference>
<dbReference type="eggNOG" id="KOG2594">
    <property type="taxonomic scope" value="Eukaryota"/>
</dbReference>
<dbReference type="HOGENOM" id="CLU_024534_2_0_1"/>
<dbReference type="InParanoid" id="Q28ES8"/>
<dbReference type="OMA" id="KQRKQMM"/>
<dbReference type="OrthoDB" id="25129at2759"/>
<dbReference type="PhylomeDB" id="Q28ES8"/>
<dbReference type="TreeFam" id="TF313203"/>
<dbReference type="UniPathway" id="UPA00988"/>
<dbReference type="Proteomes" id="UP000008143">
    <property type="component" value="Chromosome 4"/>
</dbReference>
<dbReference type="Bgee" id="ENSXETG00000011252">
    <property type="expression patterns" value="Expressed in egg cell and 14 other cell types or tissues"/>
</dbReference>
<dbReference type="GO" id="GO:0005829">
    <property type="term" value="C:cytosol"/>
    <property type="evidence" value="ECO:0000250"/>
    <property type="project" value="UniProtKB"/>
</dbReference>
<dbReference type="GO" id="GO:0016779">
    <property type="term" value="F:nucleotidyltransferase activity"/>
    <property type="evidence" value="ECO:0007669"/>
    <property type="project" value="UniProtKB-UniRule"/>
</dbReference>
<dbReference type="GO" id="GO:0000049">
    <property type="term" value="F:tRNA binding"/>
    <property type="evidence" value="ECO:0007669"/>
    <property type="project" value="InterPro"/>
</dbReference>
<dbReference type="GO" id="GO:0032447">
    <property type="term" value="P:protein urmylation"/>
    <property type="evidence" value="ECO:0007669"/>
    <property type="project" value="UniProtKB-UniRule"/>
</dbReference>
<dbReference type="GO" id="GO:0034227">
    <property type="term" value="P:tRNA thio-modification"/>
    <property type="evidence" value="ECO:0000250"/>
    <property type="project" value="UniProtKB"/>
</dbReference>
<dbReference type="GO" id="GO:0002098">
    <property type="term" value="P:tRNA wobble uridine modification"/>
    <property type="evidence" value="ECO:0000250"/>
    <property type="project" value="UniProtKB"/>
</dbReference>
<dbReference type="Gene3D" id="3.40.50.620">
    <property type="entry name" value="HUPs"/>
    <property type="match status" value="1"/>
</dbReference>
<dbReference type="HAMAP" id="MF_03054">
    <property type="entry name" value="CTU2"/>
    <property type="match status" value="1"/>
</dbReference>
<dbReference type="InterPro" id="IPR019407">
    <property type="entry name" value="CTU2"/>
</dbReference>
<dbReference type="InterPro" id="IPR014729">
    <property type="entry name" value="Rossmann-like_a/b/a_fold"/>
</dbReference>
<dbReference type="PANTHER" id="PTHR20882">
    <property type="entry name" value="CYTOPLASMIC TRNA 2-THIOLATION PROTEIN 2"/>
    <property type="match status" value="1"/>
</dbReference>
<dbReference type="PANTHER" id="PTHR20882:SF14">
    <property type="entry name" value="CYTOPLASMIC TRNA 2-THIOLATION PROTEIN 2"/>
    <property type="match status" value="1"/>
</dbReference>
<dbReference type="Pfam" id="PF10288">
    <property type="entry name" value="CTU2"/>
    <property type="match status" value="1"/>
</dbReference>
<dbReference type="SUPFAM" id="SSF52402">
    <property type="entry name" value="Adenine nucleotide alpha hydrolases-like"/>
    <property type="match status" value="1"/>
</dbReference>